<organism>
    <name type="scientific">Canis aureus</name>
    <name type="common">Golden jackal</name>
    <dbReference type="NCBI Taxonomy" id="68724"/>
    <lineage>
        <taxon>Eukaryota</taxon>
        <taxon>Metazoa</taxon>
        <taxon>Chordata</taxon>
        <taxon>Craniata</taxon>
        <taxon>Vertebrata</taxon>
        <taxon>Euteleostomi</taxon>
        <taxon>Mammalia</taxon>
        <taxon>Eutheria</taxon>
        <taxon>Laurasiatheria</taxon>
        <taxon>Carnivora</taxon>
        <taxon>Caniformia</taxon>
        <taxon>Canidae</taxon>
        <taxon>Canis</taxon>
    </lineage>
</organism>
<comment type="function">
    <text evidence="2">Component of the ubiquinol-cytochrome c reductase complex (complex III or cytochrome b-c1 complex) that is part of the mitochondrial respiratory chain. The b-c1 complex mediates electron transfer from ubiquinol to cytochrome c. Contributes to the generation of a proton gradient across the mitochondrial membrane that is then used for ATP synthesis.</text>
</comment>
<comment type="cofactor">
    <cofactor evidence="2">
        <name>heme b</name>
        <dbReference type="ChEBI" id="CHEBI:60344"/>
    </cofactor>
    <text evidence="2">Binds 2 heme b groups non-covalently.</text>
</comment>
<comment type="subunit">
    <text evidence="2">The cytochrome bc1 complex contains 11 subunits: 3 respiratory subunits (MT-CYB, CYC1 and UQCRFS1), 2 core proteins (UQCRC1 and UQCRC2) and 6 low-molecular weight proteins (UQCRH/QCR6, UQCRB/QCR7, UQCRQ/QCR8, UQCR10/QCR9, UQCR11/QCR10 and a cleavage product of UQCRFS1). This cytochrome bc1 complex then forms a dimer.</text>
</comment>
<comment type="subcellular location">
    <subcellularLocation>
        <location evidence="2">Mitochondrion inner membrane</location>
        <topology evidence="2">Multi-pass membrane protein</topology>
    </subcellularLocation>
</comment>
<comment type="miscellaneous">
    <text evidence="1">Heme 1 (or BL or b562) is low-potential and absorbs at about 562 nm, and heme 2 (or BH or b566) is high-potential and absorbs at about 566 nm.</text>
</comment>
<comment type="similarity">
    <text evidence="3 4">Belongs to the cytochrome b family.</text>
</comment>
<comment type="caution">
    <text evidence="2">The full-length protein contains only eight transmembrane helices, not nine as predicted by bioinformatics tools.</text>
</comment>
<name>CYB_CANAU</name>
<feature type="chain" id="PRO_0000060714" description="Cytochrome b">
    <location>
        <begin position="1"/>
        <end position="379"/>
    </location>
</feature>
<feature type="transmembrane region" description="Helical" evidence="2">
    <location>
        <begin position="33"/>
        <end position="53"/>
    </location>
</feature>
<feature type="transmembrane region" description="Helical" evidence="2">
    <location>
        <begin position="77"/>
        <end position="98"/>
    </location>
</feature>
<feature type="transmembrane region" description="Helical" evidence="2">
    <location>
        <begin position="113"/>
        <end position="133"/>
    </location>
</feature>
<feature type="transmembrane region" description="Helical" evidence="2">
    <location>
        <begin position="178"/>
        <end position="198"/>
    </location>
</feature>
<feature type="transmembrane region" description="Helical" evidence="2">
    <location>
        <begin position="226"/>
        <end position="246"/>
    </location>
</feature>
<feature type="transmembrane region" description="Helical" evidence="2">
    <location>
        <begin position="288"/>
        <end position="308"/>
    </location>
</feature>
<feature type="transmembrane region" description="Helical" evidence="2">
    <location>
        <begin position="320"/>
        <end position="340"/>
    </location>
</feature>
<feature type="transmembrane region" description="Helical" evidence="2">
    <location>
        <begin position="347"/>
        <end position="367"/>
    </location>
</feature>
<feature type="binding site" description="axial binding residue" evidence="2">
    <location>
        <position position="83"/>
    </location>
    <ligand>
        <name>heme b</name>
        <dbReference type="ChEBI" id="CHEBI:60344"/>
        <label>b562</label>
    </ligand>
    <ligandPart>
        <name>Fe</name>
        <dbReference type="ChEBI" id="CHEBI:18248"/>
    </ligandPart>
</feature>
<feature type="binding site" description="axial binding residue" evidence="2">
    <location>
        <position position="97"/>
    </location>
    <ligand>
        <name>heme b</name>
        <dbReference type="ChEBI" id="CHEBI:60344"/>
        <label>b566</label>
    </ligand>
    <ligandPart>
        <name>Fe</name>
        <dbReference type="ChEBI" id="CHEBI:18248"/>
    </ligandPart>
</feature>
<feature type="binding site" description="axial binding residue" evidence="2">
    <location>
        <position position="182"/>
    </location>
    <ligand>
        <name>heme b</name>
        <dbReference type="ChEBI" id="CHEBI:60344"/>
        <label>b562</label>
    </ligand>
    <ligandPart>
        <name>Fe</name>
        <dbReference type="ChEBI" id="CHEBI:18248"/>
    </ligandPart>
</feature>
<feature type="binding site" description="axial binding residue" evidence="2">
    <location>
        <position position="196"/>
    </location>
    <ligand>
        <name>heme b</name>
        <dbReference type="ChEBI" id="CHEBI:60344"/>
        <label>b566</label>
    </ligand>
    <ligandPart>
        <name>Fe</name>
        <dbReference type="ChEBI" id="CHEBI:18248"/>
    </ligandPart>
</feature>
<feature type="binding site" evidence="2">
    <location>
        <position position="201"/>
    </location>
    <ligand>
        <name>a ubiquinone</name>
        <dbReference type="ChEBI" id="CHEBI:16389"/>
    </ligand>
</feature>
<proteinExistence type="inferred from homology"/>
<sequence>MTNIRKTHPLAKIVNNSFIDLPAPSNISAWWNFGSLLGVCLILQILTGLFLAMHYTSDTATAFSSVTHICRDVNYGWIIRYMHANGASMFFICLFMHVGRGLYYGSYVFMETWNIGIVLLFATMATAFMGYVLPWGQMSFWGATVITNLLSAIPYIGTNLVEWIWGGFSVDKATLTRFFAFHFIFPFIIAALAMVHLLFLHETGSNNPSGITSDSDKIPFHPYYTIKDILGILLLLLVLMSLVLFSPDLLGDPDNYTPANPLNTPPHIKPEWYFLFAYAILRSIPNKLGGVLALVFSILILAFIPFLHTSKQRSMMFRPLSQCLFWLLVADLLTLTWIGGQPVEHPFIIIGQVASILYFTILLILMPTISVIENNLLKW</sequence>
<reference key="1">
    <citation type="submission" date="2003-05" db="EMBL/GenBank/DDBJ databases">
        <title>Ancient wolf lineages and new species from India: evidence from sequence variation in mitochondrial DNA of wolves from trans-Himalayan region and pennisular India.</title>
        <authorList>
            <person name="Aggarwal R.K."/>
            <person name="Ramadevi J."/>
            <person name="Singh L."/>
        </authorList>
    </citation>
    <scope>NUCLEOTIDE SEQUENCE [GENOMIC DNA]</scope>
</reference>
<gene>
    <name type="primary">MT-CYB</name>
    <name type="synonym">COB</name>
    <name type="synonym">CYTB</name>
    <name type="synonym">MTCYB</name>
</gene>
<protein>
    <recommendedName>
        <fullName>Cytochrome b</fullName>
    </recommendedName>
    <alternativeName>
        <fullName>Complex III subunit 3</fullName>
    </alternativeName>
    <alternativeName>
        <fullName>Complex III subunit III</fullName>
    </alternativeName>
    <alternativeName>
        <fullName>Cytochrome b-c1 complex subunit 3</fullName>
    </alternativeName>
    <alternativeName>
        <fullName>Ubiquinol-cytochrome-c reductase complex cytochrome b subunit</fullName>
    </alternativeName>
</protein>
<dbReference type="EMBL" id="AY291433">
    <property type="protein sequence ID" value="AAQ56603.1"/>
    <property type="molecule type" value="Genomic_DNA"/>
</dbReference>
<dbReference type="SMR" id="Q6JWX5"/>
<dbReference type="GO" id="GO:0005743">
    <property type="term" value="C:mitochondrial inner membrane"/>
    <property type="evidence" value="ECO:0007669"/>
    <property type="project" value="UniProtKB-SubCell"/>
</dbReference>
<dbReference type="GO" id="GO:0045275">
    <property type="term" value="C:respiratory chain complex III"/>
    <property type="evidence" value="ECO:0007669"/>
    <property type="project" value="InterPro"/>
</dbReference>
<dbReference type="GO" id="GO:0046872">
    <property type="term" value="F:metal ion binding"/>
    <property type="evidence" value="ECO:0007669"/>
    <property type="project" value="UniProtKB-KW"/>
</dbReference>
<dbReference type="GO" id="GO:0008121">
    <property type="term" value="F:ubiquinol-cytochrome-c reductase activity"/>
    <property type="evidence" value="ECO:0007669"/>
    <property type="project" value="InterPro"/>
</dbReference>
<dbReference type="GO" id="GO:0006122">
    <property type="term" value="P:mitochondrial electron transport, ubiquinol to cytochrome c"/>
    <property type="evidence" value="ECO:0007669"/>
    <property type="project" value="TreeGrafter"/>
</dbReference>
<dbReference type="CDD" id="cd00290">
    <property type="entry name" value="cytochrome_b_C"/>
    <property type="match status" value="1"/>
</dbReference>
<dbReference type="CDD" id="cd00284">
    <property type="entry name" value="Cytochrome_b_N"/>
    <property type="match status" value="1"/>
</dbReference>
<dbReference type="FunFam" id="1.20.810.10:FF:000002">
    <property type="entry name" value="Cytochrome b"/>
    <property type="match status" value="1"/>
</dbReference>
<dbReference type="Gene3D" id="1.20.810.10">
    <property type="entry name" value="Cytochrome Bc1 Complex, Chain C"/>
    <property type="match status" value="1"/>
</dbReference>
<dbReference type="InterPro" id="IPR005798">
    <property type="entry name" value="Cyt_b/b6_C"/>
</dbReference>
<dbReference type="InterPro" id="IPR036150">
    <property type="entry name" value="Cyt_b/b6_C_sf"/>
</dbReference>
<dbReference type="InterPro" id="IPR005797">
    <property type="entry name" value="Cyt_b/b6_N"/>
</dbReference>
<dbReference type="InterPro" id="IPR027387">
    <property type="entry name" value="Cytb/b6-like_sf"/>
</dbReference>
<dbReference type="InterPro" id="IPR030689">
    <property type="entry name" value="Cytochrome_b"/>
</dbReference>
<dbReference type="InterPro" id="IPR048260">
    <property type="entry name" value="Cytochrome_b_C_euk/bac"/>
</dbReference>
<dbReference type="InterPro" id="IPR048259">
    <property type="entry name" value="Cytochrome_b_N_euk/bac"/>
</dbReference>
<dbReference type="InterPro" id="IPR016174">
    <property type="entry name" value="Di-haem_cyt_TM"/>
</dbReference>
<dbReference type="PANTHER" id="PTHR19271">
    <property type="entry name" value="CYTOCHROME B"/>
    <property type="match status" value="1"/>
</dbReference>
<dbReference type="PANTHER" id="PTHR19271:SF16">
    <property type="entry name" value="CYTOCHROME B"/>
    <property type="match status" value="1"/>
</dbReference>
<dbReference type="Pfam" id="PF00032">
    <property type="entry name" value="Cytochrom_B_C"/>
    <property type="match status" value="1"/>
</dbReference>
<dbReference type="Pfam" id="PF00033">
    <property type="entry name" value="Cytochrome_B"/>
    <property type="match status" value="1"/>
</dbReference>
<dbReference type="PIRSF" id="PIRSF038885">
    <property type="entry name" value="COB"/>
    <property type="match status" value="1"/>
</dbReference>
<dbReference type="SUPFAM" id="SSF81648">
    <property type="entry name" value="a domain/subunit of cytochrome bc1 complex (Ubiquinol-cytochrome c reductase)"/>
    <property type="match status" value="1"/>
</dbReference>
<dbReference type="SUPFAM" id="SSF81342">
    <property type="entry name" value="Transmembrane di-heme cytochromes"/>
    <property type="match status" value="1"/>
</dbReference>
<dbReference type="PROSITE" id="PS51003">
    <property type="entry name" value="CYTB_CTER"/>
    <property type="match status" value="1"/>
</dbReference>
<dbReference type="PROSITE" id="PS51002">
    <property type="entry name" value="CYTB_NTER"/>
    <property type="match status" value="1"/>
</dbReference>
<accession>Q6JWX5</accession>
<keyword id="KW-0249">Electron transport</keyword>
<keyword id="KW-0349">Heme</keyword>
<keyword id="KW-0408">Iron</keyword>
<keyword id="KW-0472">Membrane</keyword>
<keyword id="KW-0479">Metal-binding</keyword>
<keyword id="KW-0496">Mitochondrion</keyword>
<keyword id="KW-0999">Mitochondrion inner membrane</keyword>
<keyword id="KW-0679">Respiratory chain</keyword>
<keyword id="KW-0812">Transmembrane</keyword>
<keyword id="KW-1133">Transmembrane helix</keyword>
<keyword id="KW-0813">Transport</keyword>
<keyword id="KW-0830">Ubiquinone</keyword>
<evidence type="ECO:0000250" key="1"/>
<evidence type="ECO:0000250" key="2">
    <source>
        <dbReference type="UniProtKB" id="P00157"/>
    </source>
</evidence>
<evidence type="ECO:0000255" key="3">
    <source>
        <dbReference type="PROSITE-ProRule" id="PRU00967"/>
    </source>
</evidence>
<evidence type="ECO:0000255" key="4">
    <source>
        <dbReference type="PROSITE-ProRule" id="PRU00968"/>
    </source>
</evidence>
<geneLocation type="mitochondrion"/>